<accession>Q5HRX9</accession>
<protein>
    <recommendedName>
        <fullName>NADPH-dependent oxidoreductase</fullName>
        <ecNumber>1.6.-.-</ecNumber>
    </recommendedName>
</protein>
<gene>
    <name type="primary">nfrA</name>
    <name type="ordered locus">SERP0062</name>
</gene>
<evidence type="ECO:0000250" key="1"/>
<evidence type="ECO:0000305" key="2"/>
<dbReference type="EC" id="1.6.-.-"/>
<dbReference type="EMBL" id="CP000029">
    <property type="protein sequence ID" value="AAW53453.1"/>
    <property type="molecule type" value="Genomic_DNA"/>
</dbReference>
<dbReference type="RefSeq" id="WP_002455899.1">
    <property type="nucleotide sequence ID" value="NC_002976.3"/>
</dbReference>
<dbReference type="SMR" id="Q5HRX9"/>
<dbReference type="STRING" id="176279.SERP0062"/>
<dbReference type="KEGG" id="ser:SERP0062"/>
<dbReference type="eggNOG" id="COG0778">
    <property type="taxonomic scope" value="Bacteria"/>
</dbReference>
<dbReference type="HOGENOM" id="CLU_070764_0_0_9"/>
<dbReference type="Proteomes" id="UP000000531">
    <property type="component" value="Chromosome"/>
</dbReference>
<dbReference type="GO" id="GO:0016491">
    <property type="term" value="F:oxidoreductase activity"/>
    <property type="evidence" value="ECO:0007669"/>
    <property type="project" value="UniProtKB-KW"/>
</dbReference>
<dbReference type="CDD" id="cd02146">
    <property type="entry name" value="NfsA-like"/>
    <property type="match status" value="1"/>
</dbReference>
<dbReference type="Gene3D" id="3.40.109.10">
    <property type="entry name" value="NADH Oxidase"/>
    <property type="match status" value="1"/>
</dbReference>
<dbReference type="InterPro" id="IPR016446">
    <property type="entry name" value="Flavin_OxRdtase_Frp"/>
</dbReference>
<dbReference type="InterPro" id="IPR029479">
    <property type="entry name" value="Nitroreductase"/>
</dbReference>
<dbReference type="InterPro" id="IPR000415">
    <property type="entry name" value="Nitroreductase-like"/>
</dbReference>
<dbReference type="PANTHER" id="PTHR43425:SF3">
    <property type="entry name" value="NADPH-DEPENDENT OXIDOREDUCTASE"/>
    <property type="match status" value="1"/>
</dbReference>
<dbReference type="PANTHER" id="PTHR43425">
    <property type="entry name" value="OXYGEN-INSENSITIVE NADPH NITROREDUCTASE"/>
    <property type="match status" value="1"/>
</dbReference>
<dbReference type="Pfam" id="PF00881">
    <property type="entry name" value="Nitroreductase"/>
    <property type="match status" value="1"/>
</dbReference>
<dbReference type="PIRSF" id="PIRSF005426">
    <property type="entry name" value="Frp"/>
    <property type="match status" value="1"/>
</dbReference>
<dbReference type="SUPFAM" id="SSF55469">
    <property type="entry name" value="FMN-dependent nitroreductase-like"/>
    <property type="match status" value="1"/>
</dbReference>
<keyword id="KW-0285">Flavoprotein</keyword>
<keyword id="KW-0288">FMN</keyword>
<keyword id="KW-0521">NADP</keyword>
<keyword id="KW-0560">Oxidoreductase</keyword>
<keyword id="KW-1185">Reference proteome</keyword>
<comment type="function">
    <text evidence="1">Reduces FMN, organic nitro compounds and disulfide DTNB. Involved in maintenance of the cellular redox state and the disulfide stress response (By similarity).</text>
</comment>
<comment type="cofactor">
    <cofactor evidence="1">
        <name>FMN</name>
        <dbReference type="ChEBI" id="CHEBI:58210"/>
    </cofactor>
</comment>
<comment type="similarity">
    <text evidence="2">Belongs to the flavin oxidoreductase frp family.</text>
</comment>
<name>NFRA_STAEQ</name>
<feature type="chain" id="PRO_0000239729" description="NADPH-dependent oxidoreductase">
    <location>
        <begin position="1"/>
        <end position="251"/>
    </location>
</feature>
<sequence length="251" mass="28600">MSDYVYELMKQHHSVRKFKNQPLGSETVEKLVEAGQSASTSSYLQTYSIIGVEDPSIKARLKEVSGQPYVLDNGYLFVFVLDYYRHHLVDEVAASNMETSYGSAEGLLVGTIDVALVAQNMAVAAEDMGYGIVYLGSLRNDVARVREILNLPDYTFPLFGMAVGEPSDEENGSPKPRLPFKHIFHKDQYDANQHQQRKELEAYDQVVSEYYKERTHGVRTENWSQQIETFLGRKTRLDMLDELKKAGFIQR</sequence>
<reference key="1">
    <citation type="journal article" date="2005" name="J. Bacteriol.">
        <title>Insights on evolution of virulence and resistance from the complete genome analysis of an early methicillin-resistant Staphylococcus aureus strain and a biofilm-producing methicillin-resistant Staphylococcus epidermidis strain.</title>
        <authorList>
            <person name="Gill S.R."/>
            <person name="Fouts D.E."/>
            <person name="Archer G.L."/>
            <person name="Mongodin E.F."/>
            <person name="DeBoy R.T."/>
            <person name="Ravel J."/>
            <person name="Paulsen I.T."/>
            <person name="Kolonay J.F."/>
            <person name="Brinkac L.M."/>
            <person name="Beanan M.J."/>
            <person name="Dodson R.J."/>
            <person name="Daugherty S.C."/>
            <person name="Madupu R."/>
            <person name="Angiuoli S.V."/>
            <person name="Durkin A.S."/>
            <person name="Haft D.H."/>
            <person name="Vamathevan J.J."/>
            <person name="Khouri H."/>
            <person name="Utterback T.R."/>
            <person name="Lee C."/>
            <person name="Dimitrov G."/>
            <person name="Jiang L."/>
            <person name="Qin H."/>
            <person name="Weidman J."/>
            <person name="Tran K."/>
            <person name="Kang K.H."/>
            <person name="Hance I.R."/>
            <person name="Nelson K.E."/>
            <person name="Fraser C.M."/>
        </authorList>
    </citation>
    <scope>NUCLEOTIDE SEQUENCE [LARGE SCALE GENOMIC DNA]</scope>
    <source>
        <strain>ATCC 35984 / DSM 28319 / BCRC 17069 / CCUG 31568 / BM 3577 / RP62A</strain>
    </source>
</reference>
<proteinExistence type="inferred from homology"/>
<organism>
    <name type="scientific">Staphylococcus epidermidis (strain ATCC 35984 / DSM 28319 / BCRC 17069 / CCUG 31568 / BM 3577 / RP62A)</name>
    <dbReference type="NCBI Taxonomy" id="176279"/>
    <lineage>
        <taxon>Bacteria</taxon>
        <taxon>Bacillati</taxon>
        <taxon>Bacillota</taxon>
        <taxon>Bacilli</taxon>
        <taxon>Bacillales</taxon>
        <taxon>Staphylococcaceae</taxon>
        <taxon>Staphylococcus</taxon>
    </lineage>
</organism>